<accession>Q1CF51</accession>
<accession>C4GX85</accession>
<proteinExistence type="inferred from homology"/>
<sequence>MKTSLRTLSVALAAALVSPSVLAIEKIDFHGYMRAGVGVSSDGGLAEWQKTMVGRLGNESDTYGEIGLGAEVYKKEDVSFYLDSMVSMLSDGSNDSETTIGDDAQFGLRQLNLQIKGLIPGDKEAVIWGGKRYYQRHDLHIIDTKYWNISGSGAGIENYTVGPGAVSVAWVRGDANDVDTRITGDSDVNINYIDVRYAGFKPWAGSWTEVGIDYAMPNPTKQQKEYGGLYDADNAVMLTGEISQDMFGGYNKLVLQYANKGLAQNMISQGGGWYDMWHKTDEAKGYRVINTGLIPITDKFSFNHVLTWGSANDITEYTDKTNLISLVGRAQYQFTQYVRAIGEVGGFYQKDTYHNGSNYKQGGEKYTIALGLAEGPDFLSRPELRVFASYLNDSENGKPFEDGTSNDTWNFGVQVEAWW</sequence>
<feature type="signal peptide" evidence="1">
    <location>
        <begin position="1"/>
        <end position="23"/>
    </location>
</feature>
<feature type="chain" id="PRO_5000115542" description="Maltoporin 2">
    <location>
        <begin position="24"/>
        <end position="419"/>
    </location>
</feature>
<feature type="site" description="Greasy slide, important in sugar transport" evidence="1">
    <location>
        <position position="32"/>
    </location>
</feature>
<feature type="site" description="Greasy slide, important in sugar transport" evidence="1">
    <location>
        <position position="63"/>
    </location>
</feature>
<feature type="site" description="Greasy slide, important in sugar transport" evidence="1">
    <location>
        <position position="250"/>
    </location>
</feature>
<feature type="site" description="Greasy slide, important in sugar transport" evidence="1">
    <location>
        <position position="418"/>
    </location>
</feature>
<organism>
    <name type="scientific">Yersinia pestis bv. Antiqua (strain Nepal516)</name>
    <dbReference type="NCBI Taxonomy" id="377628"/>
    <lineage>
        <taxon>Bacteria</taxon>
        <taxon>Pseudomonadati</taxon>
        <taxon>Pseudomonadota</taxon>
        <taxon>Gammaproteobacteria</taxon>
        <taxon>Enterobacterales</taxon>
        <taxon>Yersiniaceae</taxon>
        <taxon>Yersinia</taxon>
    </lineage>
</organism>
<gene>
    <name evidence="1" type="primary">lamB2</name>
    <name type="ordered locus">YPN_3052</name>
    <name type="ORF">YP516_3460</name>
</gene>
<protein>
    <recommendedName>
        <fullName evidence="1">Maltoporin 2</fullName>
    </recommendedName>
    <alternativeName>
        <fullName evidence="1">Maltose-inducible porin 2</fullName>
    </alternativeName>
</protein>
<dbReference type="EMBL" id="CP000305">
    <property type="protein sequence ID" value="ABG19379.1"/>
    <property type="molecule type" value="Genomic_DNA"/>
</dbReference>
<dbReference type="EMBL" id="ACNQ01000017">
    <property type="protein sequence ID" value="EEO75535.1"/>
    <property type="molecule type" value="Genomic_DNA"/>
</dbReference>
<dbReference type="RefSeq" id="WP_002215759.1">
    <property type="nucleotide sequence ID" value="NZ_ACNQ01000017.1"/>
</dbReference>
<dbReference type="SMR" id="Q1CF51"/>
<dbReference type="KEGG" id="ypn:YPN_3052"/>
<dbReference type="HOGENOM" id="CLU_032473_4_1_6"/>
<dbReference type="Proteomes" id="UP000008936">
    <property type="component" value="Chromosome"/>
</dbReference>
<dbReference type="GO" id="GO:0009279">
    <property type="term" value="C:cell outer membrane"/>
    <property type="evidence" value="ECO:0007669"/>
    <property type="project" value="UniProtKB-SubCell"/>
</dbReference>
<dbReference type="GO" id="GO:0046930">
    <property type="term" value="C:pore complex"/>
    <property type="evidence" value="ECO:0007669"/>
    <property type="project" value="UniProtKB-KW"/>
</dbReference>
<dbReference type="GO" id="GO:0042958">
    <property type="term" value="F:maltodextrin transmembrane transporter activity"/>
    <property type="evidence" value="ECO:0007669"/>
    <property type="project" value="InterPro"/>
</dbReference>
<dbReference type="GO" id="GO:0015481">
    <property type="term" value="F:maltose transporting porin activity"/>
    <property type="evidence" value="ECO:0007669"/>
    <property type="project" value="InterPro"/>
</dbReference>
<dbReference type="GO" id="GO:0006811">
    <property type="term" value="P:monoatomic ion transport"/>
    <property type="evidence" value="ECO:0007669"/>
    <property type="project" value="UniProtKB-KW"/>
</dbReference>
<dbReference type="CDD" id="cd01346">
    <property type="entry name" value="Maltoporin-like"/>
    <property type="match status" value="1"/>
</dbReference>
<dbReference type="Gene3D" id="2.40.170.10">
    <property type="entry name" value="Porin, LamB type"/>
    <property type="match status" value="1"/>
</dbReference>
<dbReference type="HAMAP" id="MF_01301">
    <property type="entry name" value="LamB"/>
    <property type="match status" value="1"/>
</dbReference>
<dbReference type="InterPro" id="IPR050286">
    <property type="entry name" value="G_neg_Bact_CarbUptk_Porin"/>
</dbReference>
<dbReference type="InterPro" id="IPR023738">
    <property type="entry name" value="Maltoporin"/>
</dbReference>
<dbReference type="InterPro" id="IPR003192">
    <property type="entry name" value="Porin_LamB"/>
</dbReference>
<dbReference type="InterPro" id="IPR036998">
    <property type="entry name" value="Porin_LamB_sf"/>
</dbReference>
<dbReference type="NCBIfam" id="NF006860">
    <property type="entry name" value="PRK09360.1"/>
    <property type="match status" value="1"/>
</dbReference>
<dbReference type="NCBIfam" id="NF009061">
    <property type="entry name" value="PRK12395.1"/>
    <property type="match status" value="1"/>
</dbReference>
<dbReference type="PANTHER" id="PTHR38762">
    <property type="entry name" value="CRYPTIC OUTER MEMBRANE PORIN BGLH-RELATED"/>
    <property type="match status" value="1"/>
</dbReference>
<dbReference type="PANTHER" id="PTHR38762:SF1">
    <property type="entry name" value="CRYPTIC OUTER MEMBRANE PORIN BGLH-RELATED"/>
    <property type="match status" value="1"/>
</dbReference>
<dbReference type="Pfam" id="PF02264">
    <property type="entry name" value="LamB"/>
    <property type="match status" value="1"/>
</dbReference>
<dbReference type="SUPFAM" id="SSF56935">
    <property type="entry name" value="Porins"/>
    <property type="match status" value="1"/>
</dbReference>
<reference key="1">
    <citation type="journal article" date="2006" name="J. Bacteriol.">
        <title>Complete genome sequence of Yersinia pestis strains Antiqua and Nepal516: evidence of gene reduction in an emerging pathogen.</title>
        <authorList>
            <person name="Chain P.S.G."/>
            <person name="Hu P."/>
            <person name="Malfatti S.A."/>
            <person name="Radnedge L."/>
            <person name="Larimer F."/>
            <person name="Vergez L.M."/>
            <person name="Worsham P."/>
            <person name="Chu M.C."/>
            <person name="Andersen G.L."/>
        </authorList>
    </citation>
    <scope>NUCLEOTIDE SEQUENCE [LARGE SCALE GENOMIC DNA]</scope>
    <source>
        <strain>Nepal516</strain>
    </source>
</reference>
<reference key="2">
    <citation type="submission" date="2009-04" db="EMBL/GenBank/DDBJ databases">
        <title>Yersinia pestis Nepal516A whole genome shotgun sequencing project.</title>
        <authorList>
            <person name="Plunkett G. III"/>
            <person name="Anderson B.D."/>
            <person name="Baumler D.J."/>
            <person name="Burland V."/>
            <person name="Cabot E.L."/>
            <person name="Glasner J.D."/>
            <person name="Mau B."/>
            <person name="Neeno-Eckwall E."/>
            <person name="Perna N.T."/>
            <person name="Munk A.C."/>
            <person name="Tapia R."/>
            <person name="Green L.D."/>
            <person name="Rogers Y.C."/>
            <person name="Detter J.C."/>
            <person name="Bruce D.C."/>
            <person name="Brettin T.S."/>
        </authorList>
    </citation>
    <scope>NUCLEOTIDE SEQUENCE [LARGE SCALE GENOMIC DNA]</scope>
    <source>
        <strain>Nepal516</strain>
    </source>
</reference>
<name>LAMB2_YERPN</name>
<comment type="function">
    <text evidence="1">Involved in the transport of maltose and maltodextrins.</text>
</comment>
<comment type="catalytic activity">
    <reaction evidence="1">
        <text>beta-maltose(in) = beta-maltose(out)</text>
        <dbReference type="Rhea" id="RHEA:29731"/>
        <dbReference type="ChEBI" id="CHEBI:18147"/>
    </reaction>
</comment>
<comment type="subunit">
    <text evidence="1">Homotrimer formed of three 18-stranded antiparallel beta-barrels, containing three independent channels.</text>
</comment>
<comment type="subcellular location">
    <subcellularLocation>
        <location evidence="1">Cell outer membrane</location>
        <topology evidence="1">Multi-pass membrane protein</topology>
    </subcellularLocation>
</comment>
<comment type="induction">
    <text evidence="1">By maltose.</text>
</comment>
<comment type="similarity">
    <text evidence="1">Belongs to the porin LamB (TC 1.B.3) family.</text>
</comment>
<evidence type="ECO:0000255" key="1">
    <source>
        <dbReference type="HAMAP-Rule" id="MF_01301"/>
    </source>
</evidence>
<keyword id="KW-0998">Cell outer membrane</keyword>
<keyword id="KW-0406">Ion transport</keyword>
<keyword id="KW-0472">Membrane</keyword>
<keyword id="KW-0626">Porin</keyword>
<keyword id="KW-0732">Signal</keyword>
<keyword id="KW-0762">Sugar transport</keyword>
<keyword id="KW-0812">Transmembrane</keyword>
<keyword id="KW-1134">Transmembrane beta strand</keyword>
<keyword id="KW-0813">Transport</keyword>